<sequence>MAIIEAVGAREILDSRGNPTIEVEVALDDGTTARAGVPSGASTGAFEAVERRDGDKTRYGGKGVEDAVHTVIDTIAPEVLGFDASEQRLLDTTLIDLDGSSNKGKLGANAILGVSLAVARAAADSADLPLFRYVGGPNAHLLPVPMMNILNGGSHADSNVDVQEFMVAPIGAPSFREALRRGAEVYHALKSVLKERGLATGLGDEGGFAPNLPSNRDALDLILVAVEKAGYSAGTDVALALDVASTEFFSDGAYQFEGRPHTPEEMVAYYTQLIADYPMVSIEDPLSEDEWDSWAHLVSETGDRVQIVGDDLFVTNPERLAKGIELKAANSLLVKVNQIGTLTETLDAVTLAQRSGFTAMVSHRSGETEDTTIADLSVAVNAGQIKTGAPARGERINKYNQLLRIEDELGDAAVYAGRTAFPRLQG</sequence>
<gene>
    <name evidence="1" type="primary">eno</name>
    <name type="ordered locus">Bcav_1018</name>
</gene>
<accession>C5C093</accession>
<protein>
    <recommendedName>
        <fullName evidence="1">Enolase</fullName>
        <ecNumber evidence="1">4.2.1.11</ecNumber>
    </recommendedName>
    <alternativeName>
        <fullName evidence="1">2-phospho-D-glycerate hydro-lyase</fullName>
    </alternativeName>
    <alternativeName>
        <fullName evidence="1">2-phosphoglycerate dehydratase</fullName>
    </alternativeName>
</protein>
<reference key="1">
    <citation type="journal article" date="2009" name="Stand. Genomic Sci.">
        <title>Complete genome sequence of Beutenbergia cavernae type strain (HKI 0122).</title>
        <authorList>
            <person name="Land M."/>
            <person name="Pukall R."/>
            <person name="Abt B."/>
            <person name="Goker M."/>
            <person name="Rohde M."/>
            <person name="Glavina Del Rio T."/>
            <person name="Tice H."/>
            <person name="Copeland A."/>
            <person name="Cheng J.F."/>
            <person name="Lucas S."/>
            <person name="Chen F."/>
            <person name="Nolan M."/>
            <person name="Bruce D."/>
            <person name="Goodwin L."/>
            <person name="Pitluck S."/>
            <person name="Ivanova N."/>
            <person name="Mavromatis K."/>
            <person name="Ovchinnikova G."/>
            <person name="Pati A."/>
            <person name="Chen A."/>
            <person name="Palaniappan K."/>
            <person name="Hauser L."/>
            <person name="Chang Y.J."/>
            <person name="Jefferies C.C."/>
            <person name="Saunders E."/>
            <person name="Brettin T."/>
            <person name="Detter J.C."/>
            <person name="Han C."/>
            <person name="Chain P."/>
            <person name="Bristow J."/>
            <person name="Eisen J.A."/>
            <person name="Markowitz V."/>
            <person name="Hugenholtz P."/>
            <person name="Kyrpides N.C."/>
            <person name="Klenk H.P."/>
            <person name="Lapidus A."/>
        </authorList>
    </citation>
    <scope>NUCLEOTIDE SEQUENCE [LARGE SCALE GENOMIC DNA]</scope>
    <source>
        <strain>ATCC BAA-8 / DSM 12333 / CCUG 43141 / JCM 11478 / NBRC 16432 / NCIMB 13614 / HKI 0122</strain>
    </source>
</reference>
<proteinExistence type="inferred from homology"/>
<name>ENO_BEUC1</name>
<organism>
    <name type="scientific">Beutenbergia cavernae (strain ATCC BAA-8 / DSM 12333 / CCUG 43141 / JCM 11478 / NBRC 16432 / NCIMB 13614 / HKI 0122)</name>
    <dbReference type="NCBI Taxonomy" id="471853"/>
    <lineage>
        <taxon>Bacteria</taxon>
        <taxon>Bacillati</taxon>
        <taxon>Actinomycetota</taxon>
        <taxon>Actinomycetes</taxon>
        <taxon>Micrococcales</taxon>
        <taxon>Beutenbergiaceae</taxon>
        <taxon>Beutenbergia</taxon>
    </lineage>
</organism>
<evidence type="ECO:0000255" key="1">
    <source>
        <dbReference type="HAMAP-Rule" id="MF_00318"/>
    </source>
</evidence>
<feature type="chain" id="PRO_1000205084" description="Enolase">
    <location>
        <begin position="1"/>
        <end position="426"/>
    </location>
</feature>
<feature type="active site" description="Proton donor" evidence="1">
    <location>
        <position position="205"/>
    </location>
</feature>
<feature type="active site" description="Proton acceptor" evidence="1">
    <location>
        <position position="335"/>
    </location>
</feature>
<feature type="binding site" evidence="1">
    <location>
        <position position="163"/>
    </location>
    <ligand>
        <name>(2R)-2-phosphoglycerate</name>
        <dbReference type="ChEBI" id="CHEBI:58289"/>
    </ligand>
</feature>
<feature type="binding site" evidence="1">
    <location>
        <position position="242"/>
    </location>
    <ligand>
        <name>Mg(2+)</name>
        <dbReference type="ChEBI" id="CHEBI:18420"/>
    </ligand>
</feature>
<feature type="binding site" evidence="1">
    <location>
        <position position="283"/>
    </location>
    <ligand>
        <name>Mg(2+)</name>
        <dbReference type="ChEBI" id="CHEBI:18420"/>
    </ligand>
</feature>
<feature type="binding site" evidence="1">
    <location>
        <position position="310"/>
    </location>
    <ligand>
        <name>Mg(2+)</name>
        <dbReference type="ChEBI" id="CHEBI:18420"/>
    </ligand>
</feature>
<feature type="binding site" evidence="1">
    <location>
        <position position="335"/>
    </location>
    <ligand>
        <name>(2R)-2-phosphoglycerate</name>
        <dbReference type="ChEBI" id="CHEBI:58289"/>
    </ligand>
</feature>
<feature type="binding site" evidence="1">
    <location>
        <position position="364"/>
    </location>
    <ligand>
        <name>(2R)-2-phosphoglycerate</name>
        <dbReference type="ChEBI" id="CHEBI:58289"/>
    </ligand>
</feature>
<feature type="binding site" evidence="1">
    <location>
        <position position="365"/>
    </location>
    <ligand>
        <name>(2R)-2-phosphoglycerate</name>
        <dbReference type="ChEBI" id="CHEBI:58289"/>
    </ligand>
</feature>
<feature type="binding site" evidence="1">
    <location>
        <position position="386"/>
    </location>
    <ligand>
        <name>(2R)-2-phosphoglycerate</name>
        <dbReference type="ChEBI" id="CHEBI:58289"/>
    </ligand>
</feature>
<keyword id="KW-0963">Cytoplasm</keyword>
<keyword id="KW-0324">Glycolysis</keyword>
<keyword id="KW-0456">Lyase</keyword>
<keyword id="KW-0460">Magnesium</keyword>
<keyword id="KW-0479">Metal-binding</keyword>
<keyword id="KW-1185">Reference proteome</keyword>
<keyword id="KW-0964">Secreted</keyword>
<comment type="function">
    <text evidence="1">Catalyzes the reversible conversion of 2-phosphoglycerate (2-PG) into phosphoenolpyruvate (PEP). It is essential for the degradation of carbohydrates via glycolysis.</text>
</comment>
<comment type="catalytic activity">
    <reaction evidence="1">
        <text>(2R)-2-phosphoglycerate = phosphoenolpyruvate + H2O</text>
        <dbReference type="Rhea" id="RHEA:10164"/>
        <dbReference type="ChEBI" id="CHEBI:15377"/>
        <dbReference type="ChEBI" id="CHEBI:58289"/>
        <dbReference type="ChEBI" id="CHEBI:58702"/>
        <dbReference type="EC" id="4.2.1.11"/>
    </reaction>
</comment>
<comment type="cofactor">
    <cofactor evidence="1">
        <name>Mg(2+)</name>
        <dbReference type="ChEBI" id="CHEBI:18420"/>
    </cofactor>
    <text evidence="1">Binds a second Mg(2+) ion via substrate during catalysis.</text>
</comment>
<comment type="pathway">
    <text evidence="1">Carbohydrate degradation; glycolysis; pyruvate from D-glyceraldehyde 3-phosphate: step 4/5.</text>
</comment>
<comment type="subcellular location">
    <subcellularLocation>
        <location evidence="1">Cytoplasm</location>
    </subcellularLocation>
    <subcellularLocation>
        <location evidence="1">Secreted</location>
    </subcellularLocation>
    <subcellularLocation>
        <location evidence="1">Cell surface</location>
    </subcellularLocation>
    <text evidence="1">Fractions of enolase are present in both the cytoplasm and on the cell surface.</text>
</comment>
<comment type="similarity">
    <text evidence="1">Belongs to the enolase family.</text>
</comment>
<dbReference type="EC" id="4.2.1.11" evidence="1"/>
<dbReference type="EMBL" id="CP001618">
    <property type="protein sequence ID" value="ACQ79279.1"/>
    <property type="molecule type" value="Genomic_DNA"/>
</dbReference>
<dbReference type="RefSeq" id="WP_015881519.1">
    <property type="nucleotide sequence ID" value="NC_012669.1"/>
</dbReference>
<dbReference type="SMR" id="C5C093"/>
<dbReference type="STRING" id="471853.Bcav_1018"/>
<dbReference type="KEGG" id="bcv:Bcav_1018"/>
<dbReference type="eggNOG" id="COG0148">
    <property type="taxonomic scope" value="Bacteria"/>
</dbReference>
<dbReference type="HOGENOM" id="CLU_031223_2_1_11"/>
<dbReference type="OrthoDB" id="9804716at2"/>
<dbReference type="UniPathway" id="UPA00109">
    <property type="reaction ID" value="UER00187"/>
</dbReference>
<dbReference type="Proteomes" id="UP000007962">
    <property type="component" value="Chromosome"/>
</dbReference>
<dbReference type="GO" id="GO:0009986">
    <property type="term" value="C:cell surface"/>
    <property type="evidence" value="ECO:0007669"/>
    <property type="project" value="UniProtKB-SubCell"/>
</dbReference>
<dbReference type="GO" id="GO:0005576">
    <property type="term" value="C:extracellular region"/>
    <property type="evidence" value="ECO:0007669"/>
    <property type="project" value="UniProtKB-SubCell"/>
</dbReference>
<dbReference type="GO" id="GO:0000015">
    <property type="term" value="C:phosphopyruvate hydratase complex"/>
    <property type="evidence" value="ECO:0007669"/>
    <property type="project" value="InterPro"/>
</dbReference>
<dbReference type="GO" id="GO:0000287">
    <property type="term" value="F:magnesium ion binding"/>
    <property type="evidence" value="ECO:0007669"/>
    <property type="project" value="UniProtKB-UniRule"/>
</dbReference>
<dbReference type="GO" id="GO:0004634">
    <property type="term" value="F:phosphopyruvate hydratase activity"/>
    <property type="evidence" value="ECO:0007669"/>
    <property type="project" value="UniProtKB-UniRule"/>
</dbReference>
<dbReference type="GO" id="GO:0006096">
    <property type="term" value="P:glycolytic process"/>
    <property type="evidence" value="ECO:0007669"/>
    <property type="project" value="UniProtKB-UniRule"/>
</dbReference>
<dbReference type="CDD" id="cd03313">
    <property type="entry name" value="enolase"/>
    <property type="match status" value="1"/>
</dbReference>
<dbReference type="FunFam" id="3.20.20.120:FF:000001">
    <property type="entry name" value="Enolase"/>
    <property type="match status" value="1"/>
</dbReference>
<dbReference type="FunFam" id="3.30.390.10:FF:000001">
    <property type="entry name" value="Enolase"/>
    <property type="match status" value="1"/>
</dbReference>
<dbReference type="Gene3D" id="3.20.20.120">
    <property type="entry name" value="Enolase-like C-terminal domain"/>
    <property type="match status" value="1"/>
</dbReference>
<dbReference type="Gene3D" id="3.30.390.10">
    <property type="entry name" value="Enolase-like, N-terminal domain"/>
    <property type="match status" value="1"/>
</dbReference>
<dbReference type="HAMAP" id="MF_00318">
    <property type="entry name" value="Enolase"/>
    <property type="match status" value="1"/>
</dbReference>
<dbReference type="InterPro" id="IPR000941">
    <property type="entry name" value="Enolase"/>
</dbReference>
<dbReference type="InterPro" id="IPR036849">
    <property type="entry name" value="Enolase-like_C_sf"/>
</dbReference>
<dbReference type="InterPro" id="IPR029017">
    <property type="entry name" value="Enolase-like_N"/>
</dbReference>
<dbReference type="InterPro" id="IPR020810">
    <property type="entry name" value="Enolase_C"/>
</dbReference>
<dbReference type="InterPro" id="IPR020809">
    <property type="entry name" value="Enolase_CS"/>
</dbReference>
<dbReference type="InterPro" id="IPR020811">
    <property type="entry name" value="Enolase_N"/>
</dbReference>
<dbReference type="NCBIfam" id="TIGR01060">
    <property type="entry name" value="eno"/>
    <property type="match status" value="1"/>
</dbReference>
<dbReference type="PANTHER" id="PTHR11902">
    <property type="entry name" value="ENOLASE"/>
    <property type="match status" value="1"/>
</dbReference>
<dbReference type="PANTHER" id="PTHR11902:SF1">
    <property type="entry name" value="ENOLASE"/>
    <property type="match status" value="1"/>
</dbReference>
<dbReference type="Pfam" id="PF00113">
    <property type="entry name" value="Enolase_C"/>
    <property type="match status" value="1"/>
</dbReference>
<dbReference type="Pfam" id="PF03952">
    <property type="entry name" value="Enolase_N"/>
    <property type="match status" value="1"/>
</dbReference>
<dbReference type="PIRSF" id="PIRSF001400">
    <property type="entry name" value="Enolase"/>
    <property type="match status" value="1"/>
</dbReference>
<dbReference type="PRINTS" id="PR00148">
    <property type="entry name" value="ENOLASE"/>
</dbReference>
<dbReference type="SFLD" id="SFLDS00001">
    <property type="entry name" value="Enolase"/>
    <property type="match status" value="1"/>
</dbReference>
<dbReference type="SFLD" id="SFLDF00002">
    <property type="entry name" value="enolase"/>
    <property type="match status" value="1"/>
</dbReference>
<dbReference type="SMART" id="SM01192">
    <property type="entry name" value="Enolase_C"/>
    <property type="match status" value="1"/>
</dbReference>
<dbReference type="SMART" id="SM01193">
    <property type="entry name" value="Enolase_N"/>
    <property type="match status" value="1"/>
</dbReference>
<dbReference type="SUPFAM" id="SSF51604">
    <property type="entry name" value="Enolase C-terminal domain-like"/>
    <property type="match status" value="1"/>
</dbReference>
<dbReference type="SUPFAM" id="SSF54826">
    <property type="entry name" value="Enolase N-terminal domain-like"/>
    <property type="match status" value="1"/>
</dbReference>
<dbReference type="PROSITE" id="PS00164">
    <property type="entry name" value="ENOLASE"/>
    <property type="match status" value="1"/>
</dbReference>